<sequence>MILPILGGPTGSGKTSLTQVLDPKRFEIVSFDSRQVYRDLPVGTTAPTPEECSTIRHWLIGFLNANESINANQFSLLARNAIADIQSRGKIPFLLGGTGFYLRAFLLGMYPVPTVPKETKDYVFTLPLEEARSQLLAKDPKAMESLSDQDGYRIKRALEVVLTGVLWSDVSKETVGGFWKDNPEVKIVGHWLDWPREILYQRINTRVETIIRGMLEETKEVLSKYGPDCPGLRTLGYNFALAFLNGMIDSNTFIEQLAQSHRNYAKRQITWFKKESFLSPISYDAAVQLYTNIEQR</sequence>
<dbReference type="EC" id="2.5.1.75" evidence="1"/>
<dbReference type="EMBL" id="CP000786">
    <property type="protein sequence ID" value="ABZ96616.1"/>
    <property type="molecule type" value="Genomic_DNA"/>
</dbReference>
<dbReference type="RefSeq" id="WP_012387503.1">
    <property type="nucleotide sequence ID" value="NC_010602.1"/>
</dbReference>
<dbReference type="SMR" id="B0SJ27"/>
<dbReference type="STRING" id="456481.LEPBI_I0478"/>
<dbReference type="KEGG" id="lbi:LEPBI_I0478"/>
<dbReference type="HOGENOM" id="CLU_032616_0_1_12"/>
<dbReference type="OrthoDB" id="9776390at2"/>
<dbReference type="BioCyc" id="LBIF456481:LEPBI_RS02340-MONOMER"/>
<dbReference type="Proteomes" id="UP000001847">
    <property type="component" value="Chromosome I"/>
</dbReference>
<dbReference type="GO" id="GO:0005524">
    <property type="term" value="F:ATP binding"/>
    <property type="evidence" value="ECO:0007669"/>
    <property type="project" value="UniProtKB-UniRule"/>
</dbReference>
<dbReference type="GO" id="GO:0052381">
    <property type="term" value="F:tRNA dimethylallyltransferase activity"/>
    <property type="evidence" value="ECO:0007669"/>
    <property type="project" value="UniProtKB-UniRule"/>
</dbReference>
<dbReference type="GO" id="GO:0006400">
    <property type="term" value="P:tRNA modification"/>
    <property type="evidence" value="ECO:0007669"/>
    <property type="project" value="TreeGrafter"/>
</dbReference>
<dbReference type="Gene3D" id="1.10.20.140">
    <property type="match status" value="1"/>
</dbReference>
<dbReference type="Gene3D" id="3.40.50.300">
    <property type="entry name" value="P-loop containing nucleotide triphosphate hydrolases"/>
    <property type="match status" value="1"/>
</dbReference>
<dbReference type="HAMAP" id="MF_00185">
    <property type="entry name" value="IPP_trans"/>
    <property type="match status" value="1"/>
</dbReference>
<dbReference type="InterPro" id="IPR039657">
    <property type="entry name" value="Dimethylallyltransferase"/>
</dbReference>
<dbReference type="InterPro" id="IPR018022">
    <property type="entry name" value="IPT"/>
</dbReference>
<dbReference type="InterPro" id="IPR027417">
    <property type="entry name" value="P-loop_NTPase"/>
</dbReference>
<dbReference type="NCBIfam" id="TIGR00174">
    <property type="entry name" value="miaA"/>
    <property type="match status" value="1"/>
</dbReference>
<dbReference type="PANTHER" id="PTHR11088">
    <property type="entry name" value="TRNA DIMETHYLALLYLTRANSFERASE"/>
    <property type="match status" value="1"/>
</dbReference>
<dbReference type="PANTHER" id="PTHR11088:SF60">
    <property type="entry name" value="TRNA DIMETHYLALLYLTRANSFERASE"/>
    <property type="match status" value="1"/>
</dbReference>
<dbReference type="Pfam" id="PF01715">
    <property type="entry name" value="IPPT"/>
    <property type="match status" value="1"/>
</dbReference>
<dbReference type="SUPFAM" id="SSF52540">
    <property type="entry name" value="P-loop containing nucleoside triphosphate hydrolases"/>
    <property type="match status" value="1"/>
</dbReference>
<reference key="1">
    <citation type="journal article" date="2008" name="PLoS ONE">
        <title>Genome sequence of the saprophyte Leptospira biflexa provides insights into the evolution of Leptospira and the pathogenesis of leptospirosis.</title>
        <authorList>
            <person name="Picardeau M."/>
            <person name="Bulach D.M."/>
            <person name="Bouchier C."/>
            <person name="Zuerner R.L."/>
            <person name="Zidane N."/>
            <person name="Wilson P.J."/>
            <person name="Creno S."/>
            <person name="Kuczek E.S."/>
            <person name="Bommezzadri S."/>
            <person name="Davis J.C."/>
            <person name="McGrath A."/>
            <person name="Johnson M.J."/>
            <person name="Boursaux-Eude C."/>
            <person name="Seemann T."/>
            <person name="Rouy Z."/>
            <person name="Coppel R.L."/>
            <person name="Rood J.I."/>
            <person name="Lajus A."/>
            <person name="Davies J.K."/>
            <person name="Medigue C."/>
            <person name="Adler B."/>
        </authorList>
    </citation>
    <scope>NUCLEOTIDE SEQUENCE [LARGE SCALE GENOMIC DNA]</scope>
    <source>
        <strain>Patoc 1 / ATCC 23582 / Paris</strain>
    </source>
</reference>
<feature type="chain" id="PRO_0000377203" description="tRNA dimethylallyltransferase">
    <location>
        <begin position="1"/>
        <end position="296"/>
    </location>
</feature>
<feature type="region of interest" description="Interaction with substrate tRNA" evidence="1">
    <location>
        <begin position="32"/>
        <end position="35"/>
    </location>
</feature>
<feature type="binding site" evidence="1">
    <location>
        <begin position="8"/>
        <end position="15"/>
    </location>
    <ligand>
        <name>ATP</name>
        <dbReference type="ChEBI" id="CHEBI:30616"/>
    </ligand>
</feature>
<feature type="binding site" evidence="1">
    <location>
        <begin position="10"/>
        <end position="15"/>
    </location>
    <ligand>
        <name>substrate</name>
    </ligand>
</feature>
<feature type="site" description="Interaction with substrate tRNA" evidence="1">
    <location>
        <position position="98"/>
    </location>
</feature>
<protein>
    <recommendedName>
        <fullName evidence="1">tRNA dimethylallyltransferase</fullName>
        <ecNumber evidence="1">2.5.1.75</ecNumber>
    </recommendedName>
    <alternativeName>
        <fullName evidence="1">Dimethylallyl diphosphate:tRNA dimethylallyltransferase</fullName>
        <shortName evidence="1">DMAPP:tRNA dimethylallyltransferase</shortName>
        <shortName evidence="1">DMATase</shortName>
    </alternativeName>
    <alternativeName>
        <fullName evidence="1">Isopentenyl-diphosphate:tRNA isopentenyltransferase</fullName>
        <shortName evidence="1">IPP transferase</shortName>
        <shortName evidence="1">IPPT</shortName>
        <shortName evidence="1">IPTase</shortName>
    </alternativeName>
</protein>
<evidence type="ECO:0000255" key="1">
    <source>
        <dbReference type="HAMAP-Rule" id="MF_00185"/>
    </source>
</evidence>
<proteinExistence type="inferred from homology"/>
<name>MIAA_LEPBP</name>
<organism>
    <name type="scientific">Leptospira biflexa serovar Patoc (strain Patoc 1 / ATCC 23582 / Paris)</name>
    <dbReference type="NCBI Taxonomy" id="456481"/>
    <lineage>
        <taxon>Bacteria</taxon>
        <taxon>Pseudomonadati</taxon>
        <taxon>Spirochaetota</taxon>
        <taxon>Spirochaetia</taxon>
        <taxon>Leptospirales</taxon>
        <taxon>Leptospiraceae</taxon>
        <taxon>Leptospira</taxon>
    </lineage>
</organism>
<gene>
    <name evidence="1" type="primary">miaA</name>
    <name type="ordered locus">LEPBI_I0478</name>
</gene>
<keyword id="KW-0067">ATP-binding</keyword>
<keyword id="KW-0460">Magnesium</keyword>
<keyword id="KW-0547">Nucleotide-binding</keyword>
<keyword id="KW-1185">Reference proteome</keyword>
<keyword id="KW-0808">Transferase</keyword>
<keyword id="KW-0819">tRNA processing</keyword>
<accession>B0SJ27</accession>
<comment type="function">
    <text evidence="1">Catalyzes the transfer of a dimethylallyl group onto the adenine at position 37 in tRNAs that read codons beginning with uridine, leading to the formation of N6-(dimethylallyl)adenosine (i(6)A).</text>
</comment>
<comment type="catalytic activity">
    <reaction evidence="1">
        <text>adenosine(37) in tRNA + dimethylallyl diphosphate = N(6)-dimethylallyladenosine(37) in tRNA + diphosphate</text>
        <dbReference type="Rhea" id="RHEA:26482"/>
        <dbReference type="Rhea" id="RHEA-COMP:10162"/>
        <dbReference type="Rhea" id="RHEA-COMP:10375"/>
        <dbReference type="ChEBI" id="CHEBI:33019"/>
        <dbReference type="ChEBI" id="CHEBI:57623"/>
        <dbReference type="ChEBI" id="CHEBI:74411"/>
        <dbReference type="ChEBI" id="CHEBI:74415"/>
        <dbReference type="EC" id="2.5.1.75"/>
    </reaction>
</comment>
<comment type="cofactor">
    <cofactor evidence="1">
        <name>Mg(2+)</name>
        <dbReference type="ChEBI" id="CHEBI:18420"/>
    </cofactor>
</comment>
<comment type="subunit">
    <text evidence="1">Monomer.</text>
</comment>
<comment type="similarity">
    <text evidence="1">Belongs to the IPP transferase family.</text>
</comment>